<comment type="function">
    <text evidence="1">One of several proteins that assist in the late maturation steps of the functional core of the 30S ribosomal subunit. Helps release RbfA from mature subunits. May play a role in the assembly of ribosomal proteins into the subunit. Circularly permuted GTPase that catalyzes slow GTP hydrolysis, GTPase activity is stimulated by the 30S ribosomal subunit.</text>
</comment>
<comment type="cofactor">
    <cofactor evidence="1">
        <name>Zn(2+)</name>
        <dbReference type="ChEBI" id="CHEBI:29105"/>
    </cofactor>
    <text evidence="1">Binds 1 zinc ion per subunit.</text>
</comment>
<comment type="subunit">
    <text evidence="1">Monomer. Associates with 30S ribosomal subunit, binds 16S rRNA.</text>
</comment>
<comment type="subcellular location">
    <subcellularLocation>
        <location evidence="1">Cytoplasm</location>
    </subcellularLocation>
</comment>
<comment type="similarity">
    <text evidence="1">Belongs to the TRAFAC class YlqF/YawG GTPase family. RsgA subfamily.</text>
</comment>
<name>RSGA1_VIBPA</name>
<evidence type="ECO:0000255" key="1">
    <source>
        <dbReference type="HAMAP-Rule" id="MF_01820"/>
    </source>
</evidence>
<evidence type="ECO:0000255" key="2">
    <source>
        <dbReference type="PROSITE-ProRule" id="PRU01058"/>
    </source>
</evidence>
<evidence type="ECO:0000256" key="3">
    <source>
        <dbReference type="SAM" id="MobiDB-lite"/>
    </source>
</evidence>
<accession>Q87L00</accession>
<organism>
    <name type="scientific">Vibrio parahaemolyticus serotype O3:K6 (strain RIMD 2210633)</name>
    <dbReference type="NCBI Taxonomy" id="223926"/>
    <lineage>
        <taxon>Bacteria</taxon>
        <taxon>Pseudomonadati</taxon>
        <taxon>Pseudomonadota</taxon>
        <taxon>Gammaproteobacteria</taxon>
        <taxon>Vibrionales</taxon>
        <taxon>Vibrionaceae</taxon>
        <taxon>Vibrio</taxon>
    </lineage>
</organism>
<dbReference type="EC" id="3.6.1.-" evidence="1"/>
<dbReference type="EMBL" id="BA000031">
    <property type="protein sequence ID" value="BAC61087.1"/>
    <property type="molecule type" value="Genomic_DNA"/>
</dbReference>
<dbReference type="RefSeq" id="NP_799203.1">
    <property type="nucleotide sequence ID" value="NC_004603.1"/>
</dbReference>
<dbReference type="SMR" id="Q87L00"/>
<dbReference type="GeneID" id="1190387"/>
<dbReference type="KEGG" id="vpa:VP2824"/>
<dbReference type="PATRIC" id="fig|223926.6.peg.2715"/>
<dbReference type="eggNOG" id="COG1162">
    <property type="taxonomic scope" value="Bacteria"/>
</dbReference>
<dbReference type="HOGENOM" id="CLU_033617_2_0_6"/>
<dbReference type="Proteomes" id="UP000002493">
    <property type="component" value="Chromosome 1"/>
</dbReference>
<dbReference type="GO" id="GO:0005737">
    <property type="term" value="C:cytoplasm"/>
    <property type="evidence" value="ECO:0007669"/>
    <property type="project" value="UniProtKB-SubCell"/>
</dbReference>
<dbReference type="GO" id="GO:0005525">
    <property type="term" value="F:GTP binding"/>
    <property type="evidence" value="ECO:0007669"/>
    <property type="project" value="UniProtKB-UniRule"/>
</dbReference>
<dbReference type="GO" id="GO:0003924">
    <property type="term" value="F:GTPase activity"/>
    <property type="evidence" value="ECO:0007669"/>
    <property type="project" value="UniProtKB-UniRule"/>
</dbReference>
<dbReference type="GO" id="GO:0046872">
    <property type="term" value="F:metal ion binding"/>
    <property type="evidence" value="ECO:0007669"/>
    <property type="project" value="UniProtKB-KW"/>
</dbReference>
<dbReference type="GO" id="GO:0019843">
    <property type="term" value="F:rRNA binding"/>
    <property type="evidence" value="ECO:0007669"/>
    <property type="project" value="UniProtKB-KW"/>
</dbReference>
<dbReference type="GO" id="GO:0042274">
    <property type="term" value="P:ribosomal small subunit biogenesis"/>
    <property type="evidence" value="ECO:0007669"/>
    <property type="project" value="UniProtKB-UniRule"/>
</dbReference>
<dbReference type="CDD" id="cd01854">
    <property type="entry name" value="YjeQ_EngC"/>
    <property type="match status" value="1"/>
</dbReference>
<dbReference type="Gene3D" id="2.40.50.140">
    <property type="entry name" value="Nucleic acid-binding proteins"/>
    <property type="match status" value="1"/>
</dbReference>
<dbReference type="Gene3D" id="3.40.50.300">
    <property type="entry name" value="P-loop containing nucleotide triphosphate hydrolases"/>
    <property type="match status" value="1"/>
</dbReference>
<dbReference type="Gene3D" id="1.10.40.50">
    <property type="entry name" value="Probable gtpase engc, domain 3"/>
    <property type="match status" value="1"/>
</dbReference>
<dbReference type="HAMAP" id="MF_01820">
    <property type="entry name" value="GTPase_RsgA"/>
    <property type="match status" value="1"/>
</dbReference>
<dbReference type="InterPro" id="IPR030378">
    <property type="entry name" value="G_CP_dom"/>
</dbReference>
<dbReference type="InterPro" id="IPR012340">
    <property type="entry name" value="NA-bd_OB-fold"/>
</dbReference>
<dbReference type="InterPro" id="IPR027417">
    <property type="entry name" value="P-loop_NTPase"/>
</dbReference>
<dbReference type="InterPro" id="IPR004881">
    <property type="entry name" value="Ribosome_biogen_GTPase_RsgA"/>
</dbReference>
<dbReference type="InterPro" id="IPR010914">
    <property type="entry name" value="RsgA_GTPase_dom"/>
</dbReference>
<dbReference type="NCBIfam" id="NF008931">
    <property type="entry name" value="PRK12288.1"/>
    <property type="match status" value="1"/>
</dbReference>
<dbReference type="NCBIfam" id="TIGR00157">
    <property type="entry name" value="ribosome small subunit-dependent GTPase A"/>
    <property type="match status" value="1"/>
</dbReference>
<dbReference type="PANTHER" id="PTHR32120">
    <property type="entry name" value="SMALL RIBOSOMAL SUBUNIT BIOGENESIS GTPASE RSGA"/>
    <property type="match status" value="1"/>
</dbReference>
<dbReference type="PANTHER" id="PTHR32120:SF11">
    <property type="entry name" value="SMALL RIBOSOMAL SUBUNIT BIOGENESIS GTPASE RSGA 1, MITOCHONDRIAL-RELATED"/>
    <property type="match status" value="1"/>
</dbReference>
<dbReference type="Pfam" id="PF03193">
    <property type="entry name" value="RsgA_GTPase"/>
    <property type="match status" value="1"/>
</dbReference>
<dbReference type="SUPFAM" id="SSF52540">
    <property type="entry name" value="P-loop containing nucleoside triphosphate hydrolases"/>
    <property type="match status" value="1"/>
</dbReference>
<dbReference type="PROSITE" id="PS50936">
    <property type="entry name" value="ENGC_GTPASE"/>
    <property type="match status" value="1"/>
</dbReference>
<dbReference type="PROSITE" id="PS51721">
    <property type="entry name" value="G_CP"/>
    <property type="match status" value="1"/>
</dbReference>
<reference key="1">
    <citation type="journal article" date="2003" name="Lancet">
        <title>Genome sequence of Vibrio parahaemolyticus: a pathogenic mechanism distinct from that of V. cholerae.</title>
        <authorList>
            <person name="Makino K."/>
            <person name="Oshima K."/>
            <person name="Kurokawa K."/>
            <person name="Yokoyama K."/>
            <person name="Uda T."/>
            <person name="Tagomori K."/>
            <person name="Iijima Y."/>
            <person name="Najima M."/>
            <person name="Nakano M."/>
            <person name="Yamashita A."/>
            <person name="Kubota Y."/>
            <person name="Kimura S."/>
            <person name="Yasunaga T."/>
            <person name="Honda T."/>
            <person name="Shinagawa H."/>
            <person name="Hattori M."/>
            <person name="Iida T."/>
        </authorList>
    </citation>
    <scope>NUCLEOTIDE SEQUENCE [LARGE SCALE GENOMIC DNA]</scope>
    <source>
        <strain>RIMD 2210633</strain>
    </source>
</reference>
<keyword id="KW-0963">Cytoplasm</keyword>
<keyword id="KW-0342">GTP-binding</keyword>
<keyword id="KW-0378">Hydrolase</keyword>
<keyword id="KW-0479">Metal-binding</keyword>
<keyword id="KW-0547">Nucleotide-binding</keyword>
<keyword id="KW-0690">Ribosome biogenesis</keyword>
<keyword id="KW-0694">RNA-binding</keyword>
<keyword id="KW-0699">rRNA-binding</keyword>
<keyword id="KW-0862">Zinc</keyword>
<proteinExistence type="inferred from homology"/>
<protein>
    <recommendedName>
        <fullName evidence="1">Small ribosomal subunit biogenesis GTPase RsgA 1</fullName>
        <ecNumber evidence="1">3.6.1.-</ecNumber>
    </recommendedName>
</protein>
<sequence>MAKKKKLTKGQVRRVRSNQQKRLKKQEESIQWDENMLGASKQGLVITRFGQHADIEDLETGEVQRCNLRRGIESLVSGDRVLWREGLESMAGISGVVEAVEPRTSMLTRPDYYDGLKPVAANIDQMVIVSSVLPELSLNIIDRYLVAAETLNIAPLLVLNKVDLLEVDDRAMYEEWLKEYERIGYKVLFVSKNSGEGISDLEVQLRDRINIFVGQSGVGKSSLVNALMPELEQEVEEGAISENSGLGQHTTTAARLYHIPTGGDLIDSPGVREFGLWHLEAEEVTKAFVEFRPYLGGCKFRDCKHNDDPGCILREAVEKGEVSEVRFENYHRILESMMENKANRQYSRNKKADL</sequence>
<feature type="chain" id="PRO_0000171540" description="Small ribosomal subunit biogenesis GTPase RsgA 1">
    <location>
        <begin position="1"/>
        <end position="354"/>
    </location>
</feature>
<feature type="domain" description="CP-type G" evidence="2">
    <location>
        <begin position="113"/>
        <end position="274"/>
    </location>
</feature>
<feature type="region of interest" description="Disordered" evidence="3">
    <location>
        <begin position="1"/>
        <end position="28"/>
    </location>
</feature>
<feature type="compositionally biased region" description="Basic residues" evidence="3">
    <location>
        <begin position="1"/>
        <end position="24"/>
    </location>
</feature>
<feature type="binding site" evidence="1">
    <location>
        <begin position="160"/>
        <end position="163"/>
    </location>
    <ligand>
        <name>GTP</name>
        <dbReference type="ChEBI" id="CHEBI:37565"/>
    </ligand>
</feature>
<feature type="binding site" evidence="1">
    <location>
        <begin position="214"/>
        <end position="222"/>
    </location>
    <ligand>
        <name>GTP</name>
        <dbReference type="ChEBI" id="CHEBI:37565"/>
    </ligand>
</feature>
<feature type="binding site" evidence="1">
    <location>
        <position position="298"/>
    </location>
    <ligand>
        <name>Zn(2+)</name>
        <dbReference type="ChEBI" id="CHEBI:29105"/>
    </ligand>
</feature>
<feature type="binding site" evidence="1">
    <location>
        <position position="303"/>
    </location>
    <ligand>
        <name>Zn(2+)</name>
        <dbReference type="ChEBI" id="CHEBI:29105"/>
    </ligand>
</feature>
<feature type="binding site" evidence="1">
    <location>
        <position position="305"/>
    </location>
    <ligand>
        <name>Zn(2+)</name>
        <dbReference type="ChEBI" id="CHEBI:29105"/>
    </ligand>
</feature>
<feature type="binding site" evidence="1">
    <location>
        <position position="311"/>
    </location>
    <ligand>
        <name>Zn(2+)</name>
        <dbReference type="ChEBI" id="CHEBI:29105"/>
    </ligand>
</feature>
<gene>
    <name evidence="1" type="primary">rsgA1</name>
    <name type="ordered locus">VP2824</name>
</gene>